<protein>
    <recommendedName>
        <fullName>Phosphoprotein</fullName>
        <shortName>Protein P</shortName>
    </recommendedName>
</protein>
<sequence length="241" mass="27102">MEKFAPEFHGEDANTKATKFLESLKGKFTSSKDSKKKDSIISVNSIDIELPKESPITSANHNISQSGENSDTPATNQVHTRKPLVSFREELPTSENPFTKLYKETIETFDNNEEESSYSYDEINDQTNDNITARLDRIDEKLSEIIGMLHTLVVASAGPTAARDGIRDAMVGLREEMIEKIRSEALMTNDRLEAMARLRNEESEKMAKDTSDDVNLNSTSEKLNTILEEDNSDNDLSLEDF</sequence>
<feature type="chain" id="PRO_0000142721" description="Phosphoprotein">
    <location>
        <begin position="1"/>
        <end position="241"/>
    </location>
</feature>
<feature type="region of interest" description="Binding to monomeric RNA-free nucleoprotein" evidence="1">
    <location>
        <begin position="1"/>
        <end position="30"/>
    </location>
</feature>
<feature type="region of interest" description="Important for viral particle assembly" evidence="1">
    <location>
        <begin position="39"/>
        <end position="57"/>
    </location>
</feature>
<feature type="region of interest" description="Disordered" evidence="2">
    <location>
        <begin position="51"/>
        <end position="78"/>
    </location>
</feature>
<feature type="region of interest" description="Binding to host phosphatase PP1" evidence="1">
    <location>
        <begin position="81"/>
        <end position="87"/>
    </location>
</feature>
<feature type="region of interest" description="Binding to protein M2-1" evidence="1">
    <location>
        <begin position="90"/>
        <end position="110"/>
    </location>
</feature>
<feature type="region of interest" description="Oligomerization and binding to RNA-directed RNA polymerase L" evidence="1">
    <location>
        <begin position="120"/>
        <end position="160"/>
    </location>
</feature>
<feature type="region of interest" description="Disordered" evidence="2">
    <location>
        <begin position="202"/>
        <end position="241"/>
    </location>
</feature>
<feature type="region of interest" description="Binding to RNA-directed RNA polymerase L" evidence="1">
    <location>
        <begin position="216"/>
        <end position="232"/>
    </location>
</feature>
<feature type="region of interest" description="Binding to the N-RNA complex" evidence="1">
    <location>
        <begin position="232"/>
        <end position="241"/>
    </location>
</feature>
<feature type="compositionally biased region" description="Polar residues" evidence="2">
    <location>
        <begin position="55"/>
        <end position="78"/>
    </location>
</feature>
<feature type="compositionally biased region" description="Basic and acidic residues" evidence="2">
    <location>
        <begin position="202"/>
        <end position="211"/>
    </location>
</feature>
<feature type="compositionally biased region" description="Polar residues" evidence="2">
    <location>
        <begin position="213"/>
        <end position="223"/>
    </location>
</feature>
<feature type="compositionally biased region" description="Acidic residues" evidence="2">
    <location>
        <begin position="227"/>
        <end position="241"/>
    </location>
</feature>
<feature type="site" description="Interaction with protein M2-1" evidence="1">
    <location>
        <position position="108"/>
    </location>
</feature>
<feature type="modified residue" description="Phosphothreonine; by host" evidence="1">
    <location>
        <position position="108"/>
    </location>
</feature>
<feature type="modified residue" description="Phosphoserine; by host" evidence="1">
    <location>
        <position position="116"/>
    </location>
</feature>
<feature type="modified residue" description="Phosphoserine; by host" evidence="1">
    <location>
        <position position="117"/>
    </location>
</feature>
<feature type="modified residue" description="Phosphoserine; by host" evidence="1">
    <location>
        <position position="119"/>
    </location>
</feature>
<feature type="modified residue" description="Phosphoserine; by host" evidence="1">
    <location>
        <position position="232"/>
    </location>
</feature>
<feature type="modified residue" description="Phosphoserine; by host" evidence="1">
    <location>
        <position position="237"/>
    </location>
</feature>
<name>PHOSP_ORSVW</name>
<keyword id="KW-1035">Host cytoplasm</keyword>
<keyword id="KW-0597">Phosphoprotein</keyword>
<keyword id="KW-0693">Viral RNA replication</keyword>
<keyword id="KW-0946">Virion</keyword>
<comment type="function">
    <text evidence="1">Plays critical roles in regulating RNA replication and transcription through its interactions with multiple proteins. Tethers the RNA-directed RNA polymerase L to the nucleoprotein-RNA complex. Recruits the M2-1 protein, a processivity factor that is required for efficient transcription of viral RNA. Acts as a chaperone for neo-synthesized nucleoprotein by forming an N-P complex that preserves N in a monomeric and RNA-free state and prevents the association of nascent N with host cell RNAs. Recruits the host phosphatase PP1 to inclusion bodies to regulate viral transcription.</text>
</comment>
<comment type="subunit">
    <text evidence="1">Homotetramer. Interacts with protein M2-1; the interaction between the two tetramers is required for the anti-termination and elongation transcriptional activities of protein M2-1. Interacts with host phosphatase PP1; this interaction recruits PP1 to the inclusion bodies. Formation of a complex PP1/M2-1/P allows P to target host PP1 phosphatase to the M2-1 substrate. Interacts (via C-terminus) with the nucleoprotein N (via N-terminus); the phosphorylated phosphoprotein P binds to N-RNA complex. Interacts (via N-terminus) with the monomeric RNA-free nucleoprotein N. Interacts (via C-terminus) with RNA-directed RNA polymerase L; the association of P and L forms the polymerase complex.</text>
</comment>
<comment type="subcellular location">
    <subcellularLocation>
        <location evidence="1">Virion</location>
    </subcellularLocation>
    <subcellularLocation>
        <location evidence="1">Host cytoplasm</location>
    </subcellularLocation>
    <text evidence="1">Localizes in cytoplasmic inclusion bodies.</text>
</comment>
<comment type="domain">
    <text evidence="1">The N-terminus is important for viral particle assembly. The oligomerization region is central. The C-terminus part contains binding regions for the RNA-directed RNA polymerase L and the nucleoprotein.</text>
</comment>
<comment type="PTM">
    <text evidence="1">Constitutively phosphorylated by host. Phosphorylation at S-116, S-117, S-119, S-232 and S-237 is required for transcription inhibition by M2-2 and viral particle egress. Phosphorylation at S-232 and S-237 increases the affinity of the binding to the nucleoprotein.</text>
</comment>
<comment type="similarity">
    <text evidence="3">Belongs to the pneumoviridae phosphoprotein P family.</text>
</comment>
<reference key="1">
    <citation type="journal article" date="1994" name="J. Gen. Virol.">
        <title>Molecular cloning and sequence analysis of the phosphoprotein, nucleocapsid protein, matrix protein and 22K (M2) protein of the ovine respiratory syncytial virus.</title>
        <authorList>
            <person name="Alansari H.M."/>
            <person name="Potgieter L.N.D."/>
        </authorList>
    </citation>
    <scope>NUCLEOTIDE SEQUENCE [MRNA]</scope>
</reference>
<gene>
    <name type="primary">P</name>
</gene>
<organism>
    <name type="scientific">Ovine respiratory syncytial virus (strain WSU 83-1578)</name>
    <name type="common">ORSV</name>
    <dbReference type="NCBI Taxonomy" id="79699"/>
    <lineage>
        <taxon>Viruses</taxon>
        <taxon>Riboviria</taxon>
        <taxon>Orthornavirae</taxon>
        <taxon>Negarnaviricota</taxon>
        <taxon>Haploviricotina</taxon>
        <taxon>Monjiviricetes</taxon>
        <taxon>Mononegavirales</taxon>
        <taxon>Pneumoviridae</taxon>
        <taxon>Ovine respiratory syncytial virus</taxon>
    </lineage>
</organism>
<dbReference type="EMBL" id="U07232">
    <property type="protein sequence ID" value="AAA62433.1"/>
    <property type="molecule type" value="mRNA"/>
</dbReference>
<dbReference type="SMR" id="Q83956"/>
<dbReference type="GO" id="GO:0030430">
    <property type="term" value="C:host cell cytoplasm"/>
    <property type="evidence" value="ECO:0007669"/>
    <property type="project" value="UniProtKB-SubCell"/>
</dbReference>
<dbReference type="GO" id="GO:0044423">
    <property type="term" value="C:virion component"/>
    <property type="evidence" value="ECO:0007669"/>
    <property type="project" value="UniProtKB-KW"/>
</dbReference>
<dbReference type="GO" id="GO:0003968">
    <property type="term" value="F:RNA-directed RNA polymerase activity"/>
    <property type="evidence" value="ECO:0007669"/>
    <property type="project" value="InterPro"/>
</dbReference>
<dbReference type="InterPro" id="IPR003487">
    <property type="entry name" value="Pprotein_pneumovir"/>
</dbReference>
<dbReference type="Pfam" id="PF02478">
    <property type="entry name" value="Pneumo_phosprot"/>
    <property type="match status" value="1"/>
</dbReference>
<evidence type="ECO:0000250" key="1">
    <source>
        <dbReference type="UniProtKB" id="P03421"/>
    </source>
</evidence>
<evidence type="ECO:0000256" key="2">
    <source>
        <dbReference type="SAM" id="MobiDB-lite"/>
    </source>
</evidence>
<evidence type="ECO:0000305" key="3"/>
<organismHost>
    <name type="scientific">Ovis aries</name>
    <name type="common">Sheep</name>
    <dbReference type="NCBI Taxonomy" id="9940"/>
</organismHost>
<accession>Q83956</accession>
<proteinExistence type="evidence at transcript level"/>